<feature type="chain" id="PRO_0000054125" description="Potassium channel KAT1">
    <location>
        <begin position="1"/>
        <end position="677"/>
    </location>
</feature>
<feature type="topological domain" description="Cytoplasmic" evidence="1">
    <location>
        <begin position="1"/>
        <end position="63"/>
    </location>
</feature>
<feature type="transmembrane region" description="Helical; Name=Segment S1" evidence="1">
    <location>
        <begin position="64"/>
        <end position="84"/>
    </location>
</feature>
<feature type="topological domain" description="Extracellular" evidence="1">
    <location>
        <begin position="85"/>
        <end position="90"/>
    </location>
</feature>
<feature type="transmembrane region" description="Helical; Name=Segment S2" evidence="1">
    <location>
        <begin position="91"/>
        <end position="111"/>
    </location>
</feature>
<feature type="topological domain" description="Cytoplasmic" evidence="1">
    <location>
        <begin position="112"/>
        <end position="134"/>
    </location>
</feature>
<feature type="transmembrane region" description="Helical; Name=Segment S3" evidence="1">
    <location>
        <begin position="135"/>
        <end position="155"/>
    </location>
</feature>
<feature type="topological domain" description="Extracellular" evidence="1">
    <location>
        <begin position="156"/>
        <end position="165"/>
    </location>
</feature>
<feature type="transmembrane region" description="Helical; Voltage-sensor; Name=Segment S4" evidence="1">
    <location>
        <begin position="166"/>
        <end position="186"/>
    </location>
</feature>
<feature type="topological domain" description="Cytoplasmic" evidence="1">
    <location>
        <begin position="187"/>
        <end position="200"/>
    </location>
</feature>
<feature type="transmembrane region" description="Helical; Name=Segment S5" evidence="1">
    <location>
        <begin position="201"/>
        <end position="221"/>
    </location>
</feature>
<feature type="topological domain" description="Extracellular" evidence="1">
    <location>
        <begin position="222"/>
        <end position="248"/>
    </location>
</feature>
<feature type="intramembrane region" description="Pore-forming; Name=Segment H5" evidence="1">
    <location>
        <begin position="249"/>
        <end position="268"/>
    </location>
</feature>
<feature type="topological domain" description="Extracellular" evidence="1">
    <location>
        <begin position="269"/>
        <end position="272"/>
    </location>
</feature>
<feature type="transmembrane region" description="Helical; Name=Segment S6" evidence="1">
    <location>
        <begin position="273"/>
        <end position="293"/>
    </location>
</feature>
<feature type="topological domain" description="Cytoplasmic" evidence="1">
    <location>
        <begin position="294"/>
        <end position="677"/>
    </location>
</feature>
<feature type="domain" description="KHA" evidence="2">
    <location>
        <begin position="612"/>
        <end position="677"/>
    </location>
</feature>
<feature type="region of interest" description="Disordered" evidence="3">
    <location>
        <begin position="568"/>
        <end position="601"/>
    </location>
</feature>
<feature type="compositionally biased region" description="Basic and acidic residues" evidence="3">
    <location>
        <begin position="568"/>
        <end position="577"/>
    </location>
</feature>
<feature type="binding site">
    <location>
        <begin position="377"/>
        <end position="496"/>
    </location>
    <ligand>
        <name>a nucleoside 3',5'-cyclic phosphate</name>
        <dbReference type="ChEBI" id="CHEBI:58464"/>
    </ligand>
</feature>
<feature type="mutagenesis site" description="Affects the voltage-dependent gating." evidence="12 14">
    <original>R</original>
    <variation>S</variation>
    <variation>L</variation>
    <location>
        <position position="176"/>
    </location>
</feature>
<feature type="mutagenesis site" description="Affects the voltage-dependent gating." evidence="14">
    <original>R</original>
    <variation>Q</variation>
    <location>
        <position position="177"/>
    </location>
</feature>
<feature type="mutagenesis site" description="Enhances cesium sensitivity." evidence="8">
    <original>L</original>
    <variation>I</variation>
    <variation>F</variation>
    <location>
        <position position="251"/>
    </location>
</feature>
<feature type="mutagenesis site" description="Increases sensitivity to ammonium and sodium." evidence="7 8 13 15">
    <original>T</original>
    <variation>D</variation>
    <variation>G</variation>
    <variation>Q</variation>
    <variation>E</variation>
    <location>
        <position position="256"/>
    </location>
</feature>
<feature type="mutagenesis site" description="Increases rubidium uptake and both cesium and calcium sensitivity; facilitated entry of calcium ions; when associated with A-267." evidence="7 8 13 15">
    <original>T</original>
    <variation>E</variation>
    <location>
        <position position="256"/>
    </location>
</feature>
<feature type="mutagenesis site" description="Abolishes channel activity." evidence="7 8 13 15">
    <original>T</original>
    <variation>F</variation>
    <variation>L</variation>
    <variation>P</variation>
    <variation>R</variation>
    <variation>W</variation>
    <location>
        <position position="256"/>
    </location>
</feature>
<feature type="mutagenesis site" description="Increases calcium sensitivity; facilitated entry of calcium ions; when associated with A-267." evidence="7 8 13 15">
    <original>T</original>
    <variation>S</variation>
    <location>
        <position position="256"/>
    </location>
</feature>
<feature type="mutagenesis site" description="Increases rubidium uptake and cesium sensitivity; additional increase of rubidium uptake; when associated with S-260." evidence="8">
    <original>T</original>
    <variation>S</variation>
    <location>
        <position position="259"/>
    </location>
</feature>
<feature type="mutagenesis site" description="Increases rubidium uptake; additional increase of rubidium uptake; when associated with S-259." evidence="8">
    <original>T</original>
    <variation>S</variation>
    <location>
        <position position="260"/>
    </location>
</feature>
<feature type="mutagenesis site" description="Abolishes channel activity." evidence="15">
    <original>G</original>
    <variation>K</variation>
    <location>
        <position position="262"/>
    </location>
</feature>
<feature type="mutagenesis site" description="The only mutation at this site that do not perturb the channel activity." evidence="10">
    <original>Y</original>
    <variation>F</variation>
    <location>
        <position position="263"/>
    </location>
</feature>
<feature type="mutagenesis site" description="Abolishes channel activity." evidence="10">
    <original>G</original>
    <variation>C</variation>
    <variation>F</variation>
    <variation>K</variation>
    <variation>L</variation>
    <variation>P</variation>
    <variation>S</variation>
    <variation>T</variation>
    <location>
        <position position="264"/>
    </location>
</feature>
<feature type="mutagenesis site" description="Affects the pH-dependence." evidence="4">
    <original>D</original>
    <variation>N</variation>
    <location>
        <position position="265"/>
    </location>
</feature>
<feature type="mutagenesis site" description="Increases calcium sensitivity; facilitated entry of calcium ions; when associated with S-256." evidence="11 13">
    <original>H</original>
    <variation>A</variation>
    <location>
        <position position="267"/>
    </location>
</feature>
<feature type="mutagenesis site" description="Resistance to the cesium inhibition of stomatal opening; when associated with V-269." evidence="11 13">
    <original>H</original>
    <variation>T</variation>
    <location>
        <position position="267"/>
    </location>
</feature>
<feature type="mutagenesis site" description="Resistance to the cesium inhibition of stomatal opening; when associated with T-267." evidence="11">
    <original>E</original>
    <variation>V</variation>
    <location>
        <position position="269"/>
    </location>
</feature>
<feature type="sequence conflict" description="In Ref. 3; CAA63601." evidence="16" ref="3">
    <original>W</original>
    <variation>C</variation>
    <location>
        <position position="5"/>
    </location>
</feature>
<feature type="sequence conflict" description="In Ref. 3; CAA63601." evidence="16" ref="3">
    <original>Q</original>
    <variation>E</variation>
    <location>
        <position position="330"/>
    </location>
</feature>
<feature type="sequence conflict" description="In Ref. 3; CAA63601." evidence="16" ref="3">
    <original>V</original>
    <variation>E</variation>
    <location>
        <position position="573"/>
    </location>
</feature>
<feature type="sequence conflict" description="In Ref. 3; CAA63601." evidence="16" ref="3">
    <original>T</original>
    <variation>S</variation>
    <location>
        <position position="580"/>
    </location>
</feature>
<feature type="sequence conflict" description="In Ref. 3; CAA63601." evidence="16" ref="3">
    <original>L</original>
    <variation>V</variation>
    <location>
        <position position="629"/>
    </location>
</feature>
<feature type="sequence conflict" description="In Ref. 3; CAA63601." evidence="16" ref="3">
    <original>D</original>
    <variation>N</variation>
    <location>
        <position position="664"/>
    </location>
</feature>
<feature type="turn" evidence="18">
    <location>
        <begin position="58"/>
        <end position="61"/>
    </location>
</feature>
<feature type="helix" evidence="18">
    <location>
        <begin position="62"/>
        <end position="71"/>
    </location>
</feature>
<feature type="turn" evidence="18">
    <location>
        <begin position="72"/>
        <end position="75"/>
    </location>
</feature>
<feature type="helix" evidence="18">
    <location>
        <begin position="76"/>
        <end position="82"/>
    </location>
</feature>
<feature type="strand" evidence="18">
    <location>
        <begin position="88"/>
        <end position="91"/>
    </location>
</feature>
<feature type="helix" evidence="18">
    <location>
        <begin position="94"/>
        <end position="108"/>
    </location>
</feature>
<feature type="turn" evidence="18">
    <location>
        <begin position="117"/>
        <end position="119"/>
    </location>
</feature>
<feature type="helix" evidence="18">
    <location>
        <begin position="126"/>
        <end position="136"/>
    </location>
</feature>
<feature type="turn" evidence="18">
    <location>
        <begin position="139"/>
        <end position="141"/>
    </location>
</feature>
<feature type="turn" evidence="18">
    <location>
        <begin position="143"/>
        <end position="145"/>
    </location>
</feature>
<feature type="helix" evidence="18">
    <location>
        <begin position="151"/>
        <end position="153"/>
    </location>
</feature>
<feature type="strand" evidence="18">
    <location>
        <begin position="154"/>
        <end position="156"/>
    </location>
</feature>
<feature type="helix" evidence="18">
    <location>
        <begin position="162"/>
        <end position="165"/>
    </location>
</feature>
<feature type="helix" evidence="18">
    <location>
        <begin position="167"/>
        <end position="175"/>
    </location>
</feature>
<feature type="helix" evidence="18">
    <location>
        <begin position="176"/>
        <end position="185"/>
    </location>
</feature>
<feature type="strand" evidence="17">
    <location>
        <begin position="188"/>
        <end position="191"/>
    </location>
</feature>
<feature type="helix" evidence="18">
    <location>
        <begin position="194"/>
        <end position="213"/>
    </location>
</feature>
<feature type="turn" evidence="18">
    <location>
        <begin position="215"/>
        <end position="217"/>
    </location>
</feature>
<feature type="helix" evidence="18">
    <location>
        <begin position="218"/>
        <end position="221"/>
    </location>
</feature>
<feature type="strand" evidence="18">
    <location>
        <begin position="224"/>
        <end position="227"/>
    </location>
</feature>
<feature type="turn" evidence="18">
    <location>
        <begin position="230"/>
        <end position="234"/>
    </location>
</feature>
<feature type="helix" evidence="18">
    <location>
        <begin position="248"/>
        <end position="258"/>
    </location>
</feature>
<feature type="strand" evidence="18">
    <location>
        <begin position="264"/>
        <end position="266"/>
    </location>
</feature>
<feature type="helix" evidence="18">
    <location>
        <begin position="271"/>
        <end position="281"/>
    </location>
</feature>
<feature type="helix" evidence="18">
    <location>
        <begin position="283"/>
        <end position="302"/>
    </location>
</feature>
<feature type="helix" evidence="18">
    <location>
        <begin position="305"/>
        <end position="322"/>
    </location>
</feature>
<feature type="helix" evidence="18">
    <location>
        <begin position="327"/>
        <end position="343"/>
    </location>
</feature>
<feature type="strand" evidence="18">
    <location>
        <begin position="346"/>
        <end position="348"/>
    </location>
</feature>
<feature type="turn" evidence="18">
    <location>
        <begin position="349"/>
        <end position="353"/>
    </location>
</feature>
<feature type="helix" evidence="18">
    <location>
        <begin position="360"/>
        <end position="366"/>
    </location>
</feature>
<feature type="helix" evidence="18">
    <location>
        <begin position="369"/>
        <end position="372"/>
    </location>
</feature>
<feature type="strand" evidence="18">
    <location>
        <begin position="373"/>
        <end position="375"/>
    </location>
</feature>
<feature type="strand" evidence="18">
    <location>
        <begin position="378"/>
        <end position="380"/>
    </location>
</feature>
<feature type="turn" evidence="18">
    <location>
        <begin position="383"/>
        <end position="387"/>
    </location>
</feature>
<feature type="strand" evidence="18">
    <location>
        <begin position="403"/>
        <end position="405"/>
    </location>
</feature>
<feature type="strand" evidence="17">
    <location>
        <begin position="415"/>
        <end position="420"/>
    </location>
</feature>
<feature type="strand" evidence="18">
    <location>
        <begin position="422"/>
        <end position="424"/>
    </location>
</feature>
<feature type="strand" evidence="18">
    <location>
        <begin position="427"/>
        <end position="429"/>
    </location>
</feature>
<feature type="strand" evidence="18">
    <location>
        <begin position="432"/>
        <end position="434"/>
    </location>
</feature>
<feature type="turn" evidence="18">
    <location>
        <begin position="447"/>
        <end position="450"/>
    </location>
</feature>
<feature type="strand" evidence="18">
    <location>
        <begin position="457"/>
        <end position="460"/>
    </location>
</feature>
<feature type="strand" evidence="18">
    <location>
        <begin position="469"/>
        <end position="473"/>
    </location>
</feature>
<feature type="strand" evidence="18">
    <location>
        <begin position="476"/>
        <end position="479"/>
    </location>
</feature>
<feature type="helix" evidence="18">
    <location>
        <begin position="483"/>
        <end position="490"/>
    </location>
</feature>
<evidence type="ECO:0000255" key="1"/>
<evidence type="ECO:0000255" key="2">
    <source>
        <dbReference type="PROSITE-ProRule" id="PRU00823"/>
    </source>
</evidence>
<evidence type="ECO:0000256" key="3">
    <source>
        <dbReference type="SAM" id="MobiDB-lite"/>
    </source>
</evidence>
<evidence type="ECO:0000269" key="4">
    <source>
    </source>
</evidence>
<evidence type="ECO:0000269" key="5">
    <source>
    </source>
</evidence>
<evidence type="ECO:0000269" key="6">
    <source>
    </source>
</evidence>
<evidence type="ECO:0000269" key="7">
    <source>
    </source>
</evidence>
<evidence type="ECO:0000269" key="8">
    <source>
    </source>
</evidence>
<evidence type="ECO:0000269" key="9">
    <source>
    </source>
</evidence>
<evidence type="ECO:0000269" key="10">
    <source>
    </source>
</evidence>
<evidence type="ECO:0000269" key="11">
    <source>
    </source>
</evidence>
<evidence type="ECO:0000269" key="12">
    <source>
    </source>
</evidence>
<evidence type="ECO:0000269" key="13">
    <source>
    </source>
</evidence>
<evidence type="ECO:0000269" key="14">
    <source>
    </source>
</evidence>
<evidence type="ECO:0000269" key="15">
    <source>
    </source>
</evidence>
<evidence type="ECO:0000305" key="16"/>
<evidence type="ECO:0007829" key="17">
    <source>
        <dbReference type="PDB" id="6V1X"/>
    </source>
</evidence>
<evidence type="ECO:0007829" key="18">
    <source>
        <dbReference type="PDB" id="7CAL"/>
    </source>
</evidence>
<name>KAT1_ARATH</name>
<proteinExistence type="evidence at protein level"/>
<reference key="1">
    <citation type="journal article" date="1992" name="Proc. Natl. Acad. Sci. U.S.A.">
        <title>Functional expression of a probable Arabidopsis thaliana potassium channel in Saccharomyces cerevisiae.</title>
        <authorList>
            <person name="Anderson J.A."/>
            <person name="Huprikar S.S."/>
            <person name="Kochian L.V."/>
            <person name="Lucas W.J."/>
            <person name="Gaber R.F."/>
        </authorList>
    </citation>
    <scope>NUCLEOTIDE SEQUENCE [MRNA]</scope>
</reference>
<reference key="2">
    <citation type="journal article" date="1995" name="Plant Physiol.">
        <title>Expression of an Arabidopsis potassium channel gene in guard cells.</title>
        <authorList>
            <person name="Nakamura R.L."/>
            <person name="McKendree W.L. Jr."/>
            <person name="Hirsch R.E."/>
            <person name="Sedbrook J.C."/>
            <person name="Gaber R.F."/>
            <person name="Sussman M.R."/>
        </authorList>
    </citation>
    <scope>NUCLEOTIDE SEQUENCE [GENOMIC DNA]</scope>
    <scope>TISSUE SPECIFICITY</scope>
    <source>
        <strain>cv. RLD</strain>
    </source>
</reference>
<reference key="3">
    <citation type="journal article" date="1996" name="J. Biol. Chem.">
        <title>The baculovirus/insect cell system as an alternative to Xenopus oocytes. First characterization of the AKT1 K+ channel from Arabidopsis thaliana.</title>
        <authorList>
            <person name="Gaymard F."/>
            <person name="Cerrutti M."/>
            <person name="Horeau C."/>
            <person name="Lemaillet G."/>
            <person name="Urbach S."/>
            <person name="Ravallec M."/>
            <person name="Devauchelle G."/>
            <person name="Sentenac H."/>
            <person name="Thibaud J.-B."/>
        </authorList>
    </citation>
    <scope>NUCLEOTIDE SEQUENCE [MRNA]</scope>
    <source>
        <strain>cv. Landsberg erecta</strain>
    </source>
</reference>
<reference key="4">
    <citation type="journal article" date="1998" name="DNA Res.">
        <title>Structural analysis of Arabidopsis thaliana chromosome 5. V. Sequence features of the regions of 1,381,565 bp covered by twenty one physically assigned P1 and TAC clones.</title>
        <authorList>
            <person name="Kaneko T."/>
            <person name="Kotani H."/>
            <person name="Nakamura Y."/>
            <person name="Sato S."/>
            <person name="Asamizu E."/>
            <person name="Miyajima N."/>
            <person name="Tabata S."/>
        </authorList>
    </citation>
    <scope>NUCLEOTIDE SEQUENCE [LARGE SCALE GENOMIC DNA]</scope>
    <source>
        <strain>cv. Columbia</strain>
    </source>
</reference>
<reference key="5">
    <citation type="journal article" date="2017" name="Plant J.">
        <title>Araport11: a complete reannotation of the Arabidopsis thaliana reference genome.</title>
        <authorList>
            <person name="Cheng C.Y."/>
            <person name="Krishnakumar V."/>
            <person name="Chan A.P."/>
            <person name="Thibaud-Nissen F."/>
            <person name="Schobel S."/>
            <person name="Town C.D."/>
        </authorList>
    </citation>
    <scope>GENOME REANNOTATION</scope>
    <source>
        <strain>cv. Columbia</strain>
    </source>
</reference>
<reference key="6">
    <citation type="journal article" date="1992" name="Science">
        <title>Expression of an inward-rectifying potassium channel by the Arabidopsis KAT1 cDNA.</title>
        <authorList>
            <person name="Schachtman D.P."/>
            <person name="Schroeder J.I."/>
            <person name="Lucas W.J."/>
            <person name="Anderson J.A."/>
            <person name="Gaber R.F."/>
        </authorList>
    </citation>
    <scope>FUNCTION</scope>
</reference>
<reference key="7">
    <citation type="journal article" date="1995" name="J. Biol. Chem.">
        <title>Identification of strong modifications in cation selectivity in an Arabidopsis inward rectifying potassium channel by mutant selection in yeast.</title>
        <authorList>
            <person name="Uozumi N."/>
            <person name="Gassmann W."/>
            <person name="Cao Y."/>
            <person name="Schroeder J.I."/>
        </authorList>
    </citation>
    <scope>PORE SELECTIVITY</scope>
    <scope>MUTAGENESIS OF THR-256</scope>
</reference>
<reference key="8">
    <citation type="journal article" date="1996" name="Proc. Natl. Acad. Sci. U.S.A.">
        <title>Changes in voltage activation, Cs+ sensitivity, and ion permeability in H5 mutants of the plant K+ channel KAT1.</title>
        <authorList>
            <person name="Becker D."/>
            <person name="Dreyer I."/>
            <person name="Hoth S."/>
            <person name="Reid J.D."/>
            <person name="Busch H."/>
            <person name="Lehnen M."/>
            <person name="Palme K."/>
            <person name="Hedrich R."/>
        </authorList>
    </citation>
    <scope>PORE SELECTIVITY</scope>
    <scope>MUTAGENESIS OF LEU-251; THR-256; THR-259; THR-260 AND 259-THR-THR-260</scope>
</reference>
<reference key="9">
    <citation type="journal article" date="1997" name="J. Biol. Chem.">
        <title>Determination of key structural requirements of a K+ channel pore.</title>
        <authorList>
            <person name="Nakamura R.L."/>
            <person name="Anderson J.A."/>
            <person name="Gaber R.F."/>
        </authorList>
    </citation>
    <scope>PORE SELECTIVITY</scope>
    <scope>MUTAGENESIS OF TYR-263 AND GLY-264</scope>
</reference>
<reference key="10">
    <citation type="journal article" date="1997" name="Plant Cell">
        <title>Expression of a Cs(+)-resistant guard cell K+ channel confers Cs(+)-resistant, light-induced stomatal opening in transgenic Arabidopsis.</title>
        <authorList>
            <person name="Ichida A.M."/>
            <person name="Pei Z.-M."/>
            <person name="Baizabal-Aguirre V.M."/>
            <person name="Turner K.J."/>
            <person name="Schroeder J.I."/>
        </authorList>
    </citation>
    <scope>PORE SELECTIVITY</scope>
    <scope>MUTAGENESIS OF HIS-267 AND GLU-269</scope>
</reference>
<reference key="11">
    <citation type="journal article" date="1998" name="FEBS Lett.">
        <title>Single mutations strongly alter the K(+)-selective pore of the K(in) channel KAT1.</title>
        <authorList>
            <person name="Dreyer I."/>
            <person name="Becker D."/>
            <person name="Bregante M."/>
            <person name="Gambale F."/>
            <person name="Lehnen M."/>
            <person name="Palme K."/>
            <person name="Hedrich R."/>
        </authorList>
    </citation>
    <scope>PORE SELECTIVITY</scope>
    <scope>MUTAGENESIS OF THR-256 AND HIS-267</scope>
</reference>
<reference key="12">
    <citation type="journal article" date="1998" name="Biophys. J.">
        <title>The N-terminus of the K channel KAT1 controls its voltage-dependent gating by altering the membrane electric field.</title>
        <authorList>
            <person name="Marten I."/>
            <person name="Hoshi T."/>
        </authorList>
    </citation>
    <scope>VOLTAGE-DEPENDENT GATING</scope>
    <scope>MUTAGENESIS OF ARG-176</scope>
</reference>
<reference key="13">
    <citation type="journal article" date="1998" name="J. Gen. Physiol.">
        <title>Voltage-dependent gating of single wild-type and S4 mutant KAT1 inward rectifier potassium channels.</title>
        <authorList>
            <person name="Zei P.C."/>
            <person name="Aldrich R.W."/>
        </authorList>
    </citation>
    <scope>VOLTAGE-DEPENDENT GATING</scope>
    <scope>MUTAGENESIS OF ARG-176 AND ARG-177</scope>
</reference>
<reference key="14">
    <citation type="journal article" date="1999" name="J. Membr. Biol.">
        <title>Suppression of inward-rectifying K+ channels KAT1 and AKT2 by dominant negative point mutations in the KAT1 alpha-subunit.</title>
        <authorList>
            <person name="Baizabal-Aguirre V.M."/>
            <person name="Clemens S."/>
            <person name="Uozumi N."/>
            <person name="Schroeder J.I."/>
        </authorList>
    </citation>
    <scope>INTERACTION WITH AKT2</scope>
    <scope>MUTAGENESIS OF THR-256 AND GLY-262</scope>
</reference>
<reference key="15">
    <citation type="journal article" date="1999" name="J. Biol. Chem.">
        <title>Distinct molecular bases for pH sensitivity of the guard cell K+ channels KST1 and KAT1.</title>
        <authorList>
            <person name="Hoth S."/>
            <person name="Hedrich R."/>
        </authorList>
    </citation>
    <scope>PROTON SENSITIVITY</scope>
    <scope>MUTAGENESIS OF ASP-265</scope>
</reference>
<reference key="16">
    <citation type="journal article" date="2001" name="J. Biol. Chem.">
        <title>Guard cell inward K+ channel activity in Arabidopsis involves expression of the twin channel subunits KAT1 and KAT2.</title>
        <authorList>
            <person name="Pilot G."/>
            <person name="Lacombe B."/>
            <person name="Gaymard F."/>
            <person name="Cherel I."/>
            <person name="Boucherez J."/>
            <person name="Thibaud J.-B."/>
            <person name="Sentenac H."/>
        </authorList>
    </citation>
    <scope>INTERACTION WITH KAT2</scope>
</reference>
<reference key="17">
    <citation type="journal article" date="2001" name="Plant Physiol.">
        <title>Phylogenetic relationships within cation transporter families of Arabidopsis.</title>
        <authorList>
            <person name="Maeser P."/>
            <person name="Thomine S."/>
            <person name="Schroeder J.I."/>
            <person name="Ward J.M."/>
            <person name="Hirschi K."/>
            <person name="Sze H."/>
            <person name="Talke I.N."/>
            <person name="Amtmann A."/>
            <person name="Maathuis F.J.M."/>
            <person name="Sanders D."/>
            <person name="Harper J.F."/>
            <person name="Tchieu J."/>
            <person name="Gribskov M."/>
            <person name="Persans M.W."/>
            <person name="Salt D.E."/>
            <person name="Kim S.A."/>
            <person name="Guerinot M.L."/>
        </authorList>
    </citation>
    <scope>GENE FAMILY</scope>
    <scope>NOMENCLATURE</scope>
</reference>
<reference key="18">
    <citation type="journal article" date="2016" name="Plant Cell">
        <title>S-type anion channels SLAC1 and SLAH3 function as essential negative regulators of inward K+ channels and stomatal opening in Arabidopsis.</title>
        <authorList>
            <person name="Zhang A."/>
            <person name="Ren H.M."/>
            <person name="Tan Y.Q."/>
            <person name="Qi G.N."/>
            <person name="Yao F.Y."/>
            <person name="Wu G.L."/>
            <person name="Yang L.W."/>
            <person name="Hussain J."/>
            <person name="Sun S.J."/>
            <person name="Wang Y.F."/>
        </authorList>
    </citation>
    <scope>INTERACTION WITH SLAC1 AND SLAH3</scope>
</reference>
<protein>
    <recommendedName>
        <fullName>Potassium channel KAT1</fullName>
    </recommendedName>
</protein>
<accession>Q39128</accession>
<accession>Q42426</accession>
<gene>
    <name type="primary">KAT1</name>
    <name type="ordered locus">At5g46240</name>
    <name type="ORF">MPL12.2</name>
</gene>
<sequence>MSISWTRNFFERFCVEEYNIDTIKQSSFLSADLLPSLGARINQSTKLRKHIISPFNPRYRAWEMWLVLLVIYSAWICPFQFAFITYKKDAIFIIDNIVNGFFAIDIILTFFVAYLDSHSYLLVDSPKKIAIRYLSTWFAFDVCSTAPFQPLSLLFNYNGSELGFRILSMLRLWRLRRVSSLFARLEKDIRFNYFWIRCTKLISVTLFAIHCAGCFNYLIADRYPNPRKTWIGAVYPNFKEASLWNRYVTALYWSITTLTTTGYGDFHAENPREMLFDIFFMMFNLGLTAYLIGNMTNLVVHWTSRTRTFRDSVRAASEFASRNQLPHDIQDQMLSHICLKFKTEGLKQQETLNNLPKAIRSSIANYLFFPIVHNIYLFQGVSRNFLFQLVSDIDAEYFPPKEDIILQNEAPTDLYILVSGAVDFTVYVDGHDQFQGKAVIGETFGEVGVLYYRPQPFTVRTTELSQILRISRTSLMSAMHAHADDGRVIMNNLFMKLRGQQSIAIDDSNTSGHENRDFKSMGWEEWRDSRKDGYGLDVTNPTSDTALMDAIHKEDTEMVKKILKEQKIERAKVERSSSETAGRSYANDSSKKDPYCSSSNQIIKPCKREEKRVTIHMMSESKNGKLILLPSSIEELLRLASEKFGGCNFTKITNADNAEIDDLDVIWDGDHLYFSSN</sequence>
<keyword id="KW-0002">3D-structure</keyword>
<keyword id="KW-0407">Ion channel</keyword>
<keyword id="KW-0406">Ion transport</keyword>
<keyword id="KW-0472">Membrane</keyword>
<keyword id="KW-0630">Potassium</keyword>
<keyword id="KW-0631">Potassium channel</keyword>
<keyword id="KW-0633">Potassium transport</keyword>
<keyword id="KW-1185">Reference proteome</keyword>
<keyword id="KW-0812">Transmembrane</keyword>
<keyword id="KW-1133">Transmembrane helix</keyword>
<keyword id="KW-0813">Transport</keyword>
<keyword id="KW-0851">Voltage-gated channel</keyword>
<organism>
    <name type="scientific">Arabidopsis thaliana</name>
    <name type="common">Mouse-ear cress</name>
    <dbReference type="NCBI Taxonomy" id="3702"/>
    <lineage>
        <taxon>Eukaryota</taxon>
        <taxon>Viridiplantae</taxon>
        <taxon>Streptophyta</taxon>
        <taxon>Embryophyta</taxon>
        <taxon>Tracheophyta</taxon>
        <taxon>Spermatophyta</taxon>
        <taxon>Magnoliopsida</taxon>
        <taxon>eudicotyledons</taxon>
        <taxon>Gunneridae</taxon>
        <taxon>Pentapetalae</taxon>
        <taxon>rosids</taxon>
        <taxon>malvids</taxon>
        <taxon>Brassicales</taxon>
        <taxon>Brassicaceae</taxon>
        <taxon>Camelineae</taxon>
        <taxon>Arabidopsis</taxon>
    </lineage>
</organism>
<dbReference type="EMBL" id="M86990">
    <property type="protein sequence ID" value="AAA32824.1"/>
    <property type="molecule type" value="mRNA"/>
</dbReference>
<dbReference type="EMBL" id="U25088">
    <property type="protein sequence ID" value="AAC49113.1"/>
    <property type="molecule type" value="Genomic_DNA"/>
</dbReference>
<dbReference type="EMBL" id="X93022">
    <property type="protein sequence ID" value="CAA63601.1"/>
    <property type="molecule type" value="mRNA"/>
</dbReference>
<dbReference type="EMBL" id="AB010698">
    <property type="protein sequence ID" value="BAB11079.1"/>
    <property type="molecule type" value="Genomic_DNA"/>
</dbReference>
<dbReference type="EMBL" id="CP002688">
    <property type="protein sequence ID" value="AED95356.1"/>
    <property type="molecule type" value="Genomic_DNA"/>
</dbReference>
<dbReference type="PIR" id="S32816">
    <property type="entry name" value="S32816"/>
</dbReference>
<dbReference type="RefSeq" id="NP_199436.1">
    <property type="nucleotide sequence ID" value="NM_123993.3"/>
</dbReference>
<dbReference type="PDB" id="5NWI">
    <property type="method" value="X-ray"/>
    <property type="resolution" value="2.35 A"/>
    <property type="chains" value="P=673-677"/>
</dbReference>
<dbReference type="PDB" id="5NWJ">
    <property type="method" value="X-ray"/>
    <property type="resolution" value="2.07 A"/>
    <property type="chains" value="P=671-677"/>
</dbReference>
<dbReference type="PDB" id="5NWK">
    <property type="method" value="X-ray"/>
    <property type="resolution" value="3.30 A"/>
    <property type="chains" value="P/Q/R/S/T/U/V/W=673-677"/>
</dbReference>
<dbReference type="PDB" id="6V1X">
    <property type="method" value="EM"/>
    <property type="resolution" value="3.50 A"/>
    <property type="chains" value="A/B/C/D=1-502"/>
</dbReference>
<dbReference type="PDB" id="6V1Y">
    <property type="method" value="EM"/>
    <property type="resolution" value="3.80 A"/>
    <property type="chains" value="A/B/C/D/M/N/O/P=1-502"/>
</dbReference>
<dbReference type="PDB" id="7CAL">
    <property type="method" value="EM"/>
    <property type="resolution" value="3.20 A"/>
    <property type="chains" value="A/B/C/D=1-677"/>
</dbReference>
<dbReference type="PDBsum" id="5NWI"/>
<dbReference type="PDBsum" id="5NWJ"/>
<dbReference type="PDBsum" id="5NWK"/>
<dbReference type="PDBsum" id="6V1X"/>
<dbReference type="PDBsum" id="6V1Y"/>
<dbReference type="PDBsum" id="7CAL"/>
<dbReference type="EMDB" id="EMD-21018"/>
<dbReference type="EMDB" id="EMD-21019"/>
<dbReference type="EMDB" id="EMD-30334"/>
<dbReference type="SMR" id="Q39128"/>
<dbReference type="BioGRID" id="19915">
    <property type="interactions" value="17"/>
</dbReference>
<dbReference type="FunCoup" id="Q39128">
    <property type="interactions" value="125"/>
</dbReference>
<dbReference type="IntAct" id="Q39128">
    <property type="interactions" value="8"/>
</dbReference>
<dbReference type="STRING" id="3702.Q39128"/>
<dbReference type="TCDB" id="1.A.1.4.7">
    <property type="family name" value="the voltage-gated ion channel (vic) superfamily"/>
</dbReference>
<dbReference type="iPTMnet" id="Q39128"/>
<dbReference type="PaxDb" id="3702-AT5G46240.1"/>
<dbReference type="ProteomicsDB" id="232242"/>
<dbReference type="EnsemblPlants" id="AT5G46240.1">
    <property type="protein sequence ID" value="AT5G46240.1"/>
    <property type="gene ID" value="AT5G46240"/>
</dbReference>
<dbReference type="GeneID" id="834666"/>
<dbReference type="Gramene" id="AT5G46240.1">
    <property type="protein sequence ID" value="AT5G46240.1"/>
    <property type="gene ID" value="AT5G46240"/>
</dbReference>
<dbReference type="KEGG" id="ath:AT5G46240"/>
<dbReference type="Araport" id="AT5G46240"/>
<dbReference type="TAIR" id="AT5G46240">
    <property type="gene designation" value="KAT1"/>
</dbReference>
<dbReference type="eggNOG" id="KOG0498">
    <property type="taxonomic scope" value="Eukaryota"/>
</dbReference>
<dbReference type="HOGENOM" id="CLU_005746_8_3_1"/>
<dbReference type="InParanoid" id="Q39128"/>
<dbReference type="OMA" id="CYVYCFY"/>
<dbReference type="PhylomeDB" id="Q39128"/>
<dbReference type="BioCyc" id="ARA:AT5G46240-MONOMER"/>
<dbReference type="BioCyc" id="MetaCyc:MONOMER-14553"/>
<dbReference type="PRO" id="PR:Q39128"/>
<dbReference type="Proteomes" id="UP000006548">
    <property type="component" value="Chromosome 5"/>
</dbReference>
<dbReference type="ExpressionAtlas" id="Q39128">
    <property type="expression patterns" value="baseline and differential"/>
</dbReference>
<dbReference type="GO" id="GO:0034702">
    <property type="term" value="C:monoatomic ion channel complex"/>
    <property type="evidence" value="ECO:0007669"/>
    <property type="project" value="UniProtKB-KW"/>
</dbReference>
<dbReference type="GO" id="GO:0005886">
    <property type="term" value="C:plasma membrane"/>
    <property type="evidence" value="ECO:0000314"/>
    <property type="project" value="TAIR"/>
</dbReference>
<dbReference type="GO" id="GO:0042802">
    <property type="term" value="F:identical protein binding"/>
    <property type="evidence" value="ECO:0000353"/>
    <property type="project" value="IntAct"/>
</dbReference>
<dbReference type="GO" id="GO:0005242">
    <property type="term" value="F:inward rectifier potassium channel activity"/>
    <property type="evidence" value="ECO:0000314"/>
    <property type="project" value="TAIR"/>
</dbReference>
<dbReference type="CDD" id="cd00038">
    <property type="entry name" value="CAP_ED"/>
    <property type="match status" value="1"/>
</dbReference>
<dbReference type="FunFam" id="2.60.120.10:FF:000074">
    <property type="entry name" value="Potassium channel KAT2"/>
    <property type="match status" value="1"/>
</dbReference>
<dbReference type="FunFam" id="1.10.287.70:FF:000123">
    <property type="entry name" value="Potassium channel KAT3"/>
    <property type="match status" value="1"/>
</dbReference>
<dbReference type="Gene3D" id="1.10.287.70">
    <property type="match status" value="1"/>
</dbReference>
<dbReference type="Gene3D" id="1.10.287.630">
    <property type="entry name" value="Helix hairpin bin"/>
    <property type="match status" value="1"/>
</dbReference>
<dbReference type="Gene3D" id="2.60.120.10">
    <property type="entry name" value="Jelly Rolls"/>
    <property type="match status" value="1"/>
</dbReference>
<dbReference type="InterPro" id="IPR000595">
    <property type="entry name" value="cNMP-bd_dom"/>
</dbReference>
<dbReference type="InterPro" id="IPR018490">
    <property type="entry name" value="cNMP-bd_dom_sf"/>
</dbReference>
<dbReference type="InterPro" id="IPR005821">
    <property type="entry name" value="Ion_trans_dom"/>
</dbReference>
<dbReference type="InterPro" id="IPR003938">
    <property type="entry name" value="K_chnl_volt-dep_EAG/ELK/ERG"/>
</dbReference>
<dbReference type="InterPro" id="IPR045319">
    <property type="entry name" value="KAT/AKT"/>
</dbReference>
<dbReference type="InterPro" id="IPR021789">
    <property type="entry name" value="KHA_dom"/>
</dbReference>
<dbReference type="InterPro" id="IPR014710">
    <property type="entry name" value="RmlC-like_jellyroll"/>
</dbReference>
<dbReference type="PANTHER" id="PTHR45743">
    <property type="entry name" value="POTASSIUM CHANNEL AKT1"/>
    <property type="match status" value="1"/>
</dbReference>
<dbReference type="PANTHER" id="PTHR45743:SF58">
    <property type="entry name" value="POTASSIUM CHANNEL KAT1"/>
    <property type="match status" value="1"/>
</dbReference>
<dbReference type="Pfam" id="PF00027">
    <property type="entry name" value="cNMP_binding"/>
    <property type="match status" value="1"/>
</dbReference>
<dbReference type="Pfam" id="PF00520">
    <property type="entry name" value="Ion_trans"/>
    <property type="match status" value="1"/>
</dbReference>
<dbReference type="Pfam" id="PF11834">
    <property type="entry name" value="KHA"/>
    <property type="match status" value="1"/>
</dbReference>
<dbReference type="PRINTS" id="PR01463">
    <property type="entry name" value="EAGCHANLFMLY"/>
</dbReference>
<dbReference type="SMART" id="SM00100">
    <property type="entry name" value="cNMP"/>
    <property type="match status" value="1"/>
</dbReference>
<dbReference type="SUPFAM" id="SSF51206">
    <property type="entry name" value="cAMP-binding domain-like"/>
    <property type="match status" value="1"/>
</dbReference>
<dbReference type="SUPFAM" id="SSF81324">
    <property type="entry name" value="Voltage-gated potassium channels"/>
    <property type="match status" value="1"/>
</dbReference>
<dbReference type="PROSITE" id="PS50042">
    <property type="entry name" value="CNMP_BINDING_3"/>
    <property type="match status" value="1"/>
</dbReference>
<dbReference type="PROSITE" id="PS51490">
    <property type="entry name" value="KHA"/>
    <property type="match status" value="1"/>
</dbReference>
<comment type="function">
    <text evidence="9">Highly selective inward-rectifying potassium channel. This voltage-gated channel could mediate long-term potassium influx into guard cells leading to stomatal opening. Assuming opened or closed conformations in response to the voltage difference across the membrane, the channel is activated by hyperpolarization. The channel activity is enhanced upon external acidification. Also permeable to ammonium ions. Blocked by tetraethylammonium and barium ions.</text>
</comment>
<comment type="subunit">
    <text evidence="5 16">The potassium channel is probably composed of a homo- or heterotetrameric complex of pore-forming subunits. May interact with AKT2 and KAT2 (Probable). Interacts with SLAC1 and SLAH3 (PubMed:27002025).</text>
</comment>
<comment type="interaction">
    <interactant intactId="EBI-1552490">
        <id>Q39128</id>
    </interactant>
    <interactant intactId="EBI-1552774">
        <id>Q38898</id>
        <label>AKT2</label>
    </interactant>
    <organismsDiffer>false</organismsDiffer>
    <experiments>4</experiments>
</comment>
<comment type="interaction">
    <interactant intactId="EBI-1552490">
        <id>Q39128</id>
    </interactant>
    <interactant intactId="EBI-1552490">
        <id>Q39128</id>
        <label>KAT1</label>
    </interactant>
    <organismsDiffer>false</organismsDiffer>
    <experiments>6</experiments>
</comment>
<comment type="interaction">
    <interactant intactId="EBI-1552490">
        <id>Q39128</id>
    </interactant>
    <interactant intactId="EBI-2117720">
        <id>Q38849</id>
        <label>KAT2</label>
    </interactant>
    <organismsDiffer>false</organismsDiffer>
    <experiments>3</experiments>
</comment>
<comment type="subcellular location">
    <subcellularLocation>
        <location>Membrane</location>
        <topology>Multi-pass membrane protein</topology>
    </subcellularLocation>
</comment>
<comment type="tissue specificity">
    <text evidence="6">Expressed in guard cells, and in roots.</text>
</comment>
<comment type="domain">
    <text>The segment S4 is probably the voltage-sensor and is characterized by a series of positively charged amino acids. The pore-forming region H5 is enclosed by the transmembrane segments S5 and S6 in the Shaker-type (1P/6TM) and contains the GYGD signature motif which seems to be involved in potassium selectivity.</text>
</comment>
<comment type="domain">
    <text>The KHA domain (rich in hydrophobic and acidic residues) present in the C-terminal part is likely to be important for tetramerization.</text>
</comment>
<comment type="similarity">
    <text evidence="16">Belongs to the potassium channel family. Plant (TC 1.A.1.4) subfamily.</text>
</comment>